<proteinExistence type="inferred from homology"/>
<keyword id="KW-0028">Amino-acid biosynthesis</keyword>
<keyword id="KW-0963">Cytoplasm</keyword>
<keyword id="KW-0554">One-carbon metabolism</keyword>
<keyword id="KW-0663">Pyridoxal phosphate</keyword>
<keyword id="KW-0808">Transferase</keyword>
<dbReference type="EC" id="2.1.2.1" evidence="1"/>
<dbReference type="EMBL" id="AM849034">
    <property type="protein sequence ID" value="CAQ00706.1"/>
    <property type="status" value="ALT_INIT"/>
    <property type="molecule type" value="Genomic_DNA"/>
</dbReference>
<dbReference type="RefSeq" id="WP_041464342.1">
    <property type="nucleotide sequence ID" value="NZ_MZMN01000003.1"/>
</dbReference>
<dbReference type="SMR" id="B0RDR3"/>
<dbReference type="STRING" id="31964.CMS0586"/>
<dbReference type="KEGG" id="cms:CMS0586"/>
<dbReference type="eggNOG" id="COG0112">
    <property type="taxonomic scope" value="Bacteria"/>
</dbReference>
<dbReference type="HOGENOM" id="CLU_022477_2_1_11"/>
<dbReference type="OrthoDB" id="9803846at2"/>
<dbReference type="UniPathway" id="UPA00193"/>
<dbReference type="UniPathway" id="UPA00288">
    <property type="reaction ID" value="UER01023"/>
</dbReference>
<dbReference type="Proteomes" id="UP000001318">
    <property type="component" value="Chromosome"/>
</dbReference>
<dbReference type="GO" id="GO:0005829">
    <property type="term" value="C:cytosol"/>
    <property type="evidence" value="ECO:0007669"/>
    <property type="project" value="TreeGrafter"/>
</dbReference>
<dbReference type="GO" id="GO:0004372">
    <property type="term" value="F:glycine hydroxymethyltransferase activity"/>
    <property type="evidence" value="ECO:0007669"/>
    <property type="project" value="UniProtKB-UniRule"/>
</dbReference>
<dbReference type="GO" id="GO:0030170">
    <property type="term" value="F:pyridoxal phosphate binding"/>
    <property type="evidence" value="ECO:0007669"/>
    <property type="project" value="UniProtKB-UniRule"/>
</dbReference>
<dbReference type="GO" id="GO:0019264">
    <property type="term" value="P:glycine biosynthetic process from serine"/>
    <property type="evidence" value="ECO:0007669"/>
    <property type="project" value="UniProtKB-UniRule"/>
</dbReference>
<dbReference type="GO" id="GO:0035999">
    <property type="term" value="P:tetrahydrofolate interconversion"/>
    <property type="evidence" value="ECO:0007669"/>
    <property type="project" value="UniProtKB-UniRule"/>
</dbReference>
<dbReference type="CDD" id="cd00378">
    <property type="entry name" value="SHMT"/>
    <property type="match status" value="1"/>
</dbReference>
<dbReference type="FunFam" id="3.40.640.10:FF:000001">
    <property type="entry name" value="Serine hydroxymethyltransferase"/>
    <property type="match status" value="1"/>
</dbReference>
<dbReference type="Gene3D" id="3.90.1150.10">
    <property type="entry name" value="Aspartate Aminotransferase, domain 1"/>
    <property type="match status" value="1"/>
</dbReference>
<dbReference type="Gene3D" id="3.40.640.10">
    <property type="entry name" value="Type I PLP-dependent aspartate aminotransferase-like (Major domain)"/>
    <property type="match status" value="1"/>
</dbReference>
<dbReference type="HAMAP" id="MF_00051">
    <property type="entry name" value="SHMT"/>
    <property type="match status" value="1"/>
</dbReference>
<dbReference type="InterPro" id="IPR015424">
    <property type="entry name" value="PyrdxlP-dep_Trfase"/>
</dbReference>
<dbReference type="InterPro" id="IPR015421">
    <property type="entry name" value="PyrdxlP-dep_Trfase_major"/>
</dbReference>
<dbReference type="InterPro" id="IPR015422">
    <property type="entry name" value="PyrdxlP-dep_Trfase_small"/>
</dbReference>
<dbReference type="InterPro" id="IPR001085">
    <property type="entry name" value="Ser_HO-MeTrfase"/>
</dbReference>
<dbReference type="InterPro" id="IPR049943">
    <property type="entry name" value="Ser_HO-MeTrfase-like"/>
</dbReference>
<dbReference type="InterPro" id="IPR019798">
    <property type="entry name" value="Ser_HO-MeTrfase_PLP_BS"/>
</dbReference>
<dbReference type="InterPro" id="IPR039429">
    <property type="entry name" value="SHMT-like_dom"/>
</dbReference>
<dbReference type="NCBIfam" id="NF000586">
    <property type="entry name" value="PRK00011.1"/>
    <property type="match status" value="1"/>
</dbReference>
<dbReference type="PANTHER" id="PTHR11680">
    <property type="entry name" value="SERINE HYDROXYMETHYLTRANSFERASE"/>
    <property type="match status" value="1"/>
</dbReference>
<dbReference type="PANTHER" id="PTHR11680:SF35">
    <property type="entry name" value="SERINE HYDROXYMETHYLTRANSFERASE 1"/>
    <property type="match status" value="1"/>
</dbReference>
<dbReference type="Pfam" id="PF00464">
    <property type="entry name" value="SHMT"/>
    <property type="match status" value="1"/>
</dbReference>
<dbReference type="PIRSF" id="PIRSF000412">
    <property type="entry name" value="SHMT"/>
    <property type="match status" value="1"/>
</dbReference>
<dbReference type="SUPFAM" id="SSF53383">
    <property type="entry name" value="PLP-dependent transferases"/>
    <property type="match status" value="1"/>
</dbReference>
<dbReference type="PROSITE" id="PS00096">
    <property type="entry name" value="SHMT"/>
    <property type="match status" value="1"/>
</dbReference>
<feature type="chain" id="PRO_0000369911" description="Serine hydroxymethyltransferase">
    <location>
        <begin position="1"/>
        <end position="425"/>
    </location>
</feature>
<feature type="binding site" evidence="1">
    <location>
        <position position="124"/>
    </location>
    <ligand>
        <name>(6S)-5,6,7,8-tetrahydrofolate</name>
        <dbReference type="ChEBI" id="CHEBI:57453"/>
    </ligand>
</feature>
<feature type="binding site" evidence="1">
    <location>
        <begin position="128"/>
        <end position="130"/>
    </location>
    <ligand>
        <name>(6S)-5,6,7,8-tetrahydrofolate</name>
        <dbReference type="ChEBI" id="CHEBI:57453"/>
    </ligand>
</feature>
<feature type="site" description="Plays an important role in substrate specificity" evidence="1">
    <location>
        <position position="232"/>
    </location>
</feature>
<feature type="modified residue" description="N6-(pyridoxal phosphate)lysine" evidence="1">
    <location>
        <position position="233"/>
    </location>
</feature>
<protein>
    <recommendedName>
        <fullName evidence="1">Serine hydroxymethyltransferase</fullName>
        <shortName evidence="1">SHMT</shortName>
        <shortName evidence="1">Serine methylase</shortName>
        <ecNumber evidence="1">2.1.2.1</ecNumber>
    </recommendedName>
</protein>
<reference key="1">
    <citation type="journal article" date="2008" name="J. Bacteriol.">
        <title>Genome of the actinomycete plant pathogen Clavibacter michiganensis subsp. sepedonicus suggests recent niche adaptation.</title>
        <authorList>
            <person name="Bentley S.D."/>
            <person name="Corton C."/>
            <person name="Brown S.E."/>
            <person name="Barron A."/>
            <person name="Clark L."/>
            <person name="Doggett J."/>
            <person name="Harris B."/>
            <person name="Ormond D."/>
            <person name="Quail M.A."/>
            <person name="May G."/>
            <person name="Francis D."/>
            <person name="Knudson D."/>
            <person name="Parkhill J."/>
            <person name="Ishimaru C.A."/>
        </authorList>
    </citation>
    <scope>NUCLEOTIDE SEQUENCE [LARGE SCALE GENOMIC DNA]</scope>
    <source>
        <strain>ATCC 33113 / DSM 20744 / JCM 9667 / LMG 2889 / ICMP 2535 / C-1</strain>
    </source>
</reference>
<gene>
    <name evidence="1" type="primary">glyA</name>
    <name type="ordered locus">CMS0586</name>
</gene>
<organism>
    <name type="scientific">Clavibacter sepedonicus</name>
    <name type="common">Clavibacter michiganensis subsp. sepedonicus</name>
    <dbReference type="NCBI Taxonomy" id="31964"/>
    <lineage>
        <taxon>Bacteria</taxon>
        <taxon>Bacillati</taxon>
        <taxon>Actinomycetota</taxon>
        <taxon>Actinomycetes</taxon>
        <taxon>Micrococcales</taxon>
        <taxon>Microbacteriaceae</taxon>
        <taxon>Clavibacter</taxon>
    </lineage>
</organism>
<sequence length="425" mass="45124">MPVDQSFNAPLSEVDPEIAAVLEQELGRQRGTLEMIASENFVPRAVLQSQGSVLTNKYAEGYPGRRYYGGCEFVDVAEQLAIDRAKSLFGAEFANVQPHSGATANAAVLAAIAQPGDTILGLELAHGGHLTHGMKLNFSGKLYDAAAYGVDPDTFLIDMDVVREKALEHRPQVIIAGWSAYPRHLDFAAFRSIADEVGAKLWVDMAHFAGLVAAGVHPSPVPYADVVSSTVHKTLAGPRSGVILSRDTALAKKLNSAVFPGQQGGPLMHVIAAKATAFKIAATEEFADRQRRTIQGAQILAERLVAADSTEAGVSVLTGGTDVHLVLADLRNSPIDGKQAEDALHEVGITVNRNSVPFDPRPPMVTSGVRIGTSALATRGFGETEFTEVADIIAETLKPGSDLAALRARVLTLTDGFPLYEGLTQ</sequence>
<comment type="function">
    <text evidence="1">Catalyzes the reversible interconversion of serine and glycine with tetrahydrofolate (THF) serving as the one-carbon carrier. This reaction serves as the major source of one-carbon groups required for the biosynthesis of purines, thymidylate, methionine, and other important biomolecules. Also exhibits THF-independent aldolase activity toward beta-hydroxyamino acids, producing glycine and aldehydes, via a retro-aldol mechanism.</text>
</comment>
<comment type="catalytic activity">
    <reaction evidence="1">
        <text>(6R)-5,10-methylene-5,6,7,8-tetrahydrofolate + glycine + H2O = (6S)-5,6,7,8-tetrahydrofolate + L-serine</text>
        <dbReference type="Rhea" id="RHEA:15481"/>
        <dbReference type="ChEBI" id="CHEBI:15377"/>
        <dbReference type="ChEBI" id="CHEBI:15636"/>
        <dbReference type="ChEBI" id="CHEBI:33384"/>
        <dbReference type="ChEBI" id="CHEBI:57305"/>
        <dbReference type="ChEBI" id="CHEBI:57453"/>
        <dbReference type="EC" id="2.1.2.1"/>
    </reaction>
</comment>
<comment type="cofactor">
    <cofactor evidence="1">
        <name>pyridoxal 5'-phosphate</name>
        <dbReference type="ChEBI" id="CHEBI:597326"/>
    </cofactor>
</comment>
<comment type="pathway">
    <text evidence="1">One-carbon metabolism; tetrahydrofolate interconversion.</text>
</comment>
<comment type="pathway">
    <text evidence="1">Amino-acid biosynthesis; glycine biosynthesis; glycine from L-serine: step 1/1.</text>
</comment>
<comment type="subunit">
    <text evidence="1">Homodimer.</text>
</comment>
<comment type="subcellular location">
    <subcellularLocation>
        <location evidence="1">Cytoplasm</location>
    </subcellularLocation>
</comment>
<comment type="similarity">
    <text evidence="1">Belongs to the SHMT family.</text>
</comment>
<comment type="sequence caution" evidence="2">
    <conflict type="erroneous initiation">
        <sequence resource="EMBL-CDS" id="CAQ00706"/>
    </conflict>
</comment>
<evidence type="ECO:0000255" key="1">
    <source>
        <dbReference type="HAMAP-Rule" id="MF_00051"/>
    </source>
</evidence>
<evidence type="ECO:0000305" key="2"/>
<accession>B0RDR3</accession>
<name>GLYA_CLASE</name>